<protein>
    <recommendedName>
        <fullName evidence="1">Recombination-associated protein RdgC</fullName>
    </recommendedName>
</protein>
<comment type="function">
    <text evidence="1">May be involved in recombination.</text>
</comment>
<comment type="subcellular location">
    <subcellularLocation>
        <location evidence="1">Cytoplasm</location>
        <location evidence="1">Nucleoid</location>
    </subcellularLocation>
</comment>
<comment type="similarity">
    <text evidence="1">Belongs to the RdgC family.</text>
</comment>
<keyword id="KW-0963">Cytoplasm</keyword>
<keyword id="KW-0233">DNA recombination</keyword>
<dbReference type="EMBL" id="CP000926">
    <property type="protein sequence ID" value="ABY97207.1"/>
    <property type="molecule type" value="Genomic_DNA"/>
</dbReference>
<dbReference type="RefSeq" id="WP_012270981.1">
    <property type="nucleotide sequence ID" value="NC_010322.1"/>
</dbReference>
<dbReference type="SMR" id="B0KTR8"/>
<dbReference type="KEGG" id="ppg:PputGB1_1300"/>
<dbReference type="eggNOG" id="COG2974">
    <property type="taxonomic scope" value="Bacteria"/>
</dbReference>
<dbReference type="HOGENOM" id="CLU_052038_1_1_6"/>
<dbReference type="Proteomes" id="UP000002157">
    <property type="component" value="Chromosome"/>
</dbReference>
<dbReference type="GO" id="GO:0043590">
    <property type="term" value="C:bacterial nucleoid"/>
    <property type="evidence" value="ECO:0007669"/>
    <property type="project" value="TreeGrafter"/>
</dbReference>
<dbReference type="GO" id="GO:0005737">
    <property type="term" value="C:cytoplasm"/>
    <property type="evidence" value="ECO:0007669"/>
    <property type="project" value="UniProtKB-UniRule"/>
</dbReference>
<dbReference type="GO" id="GO:0003690">
    <property type="term" value="F:double-stranded DNA binding"/>
    <property type="evidence" value="ECO:0007669"/>
    <property type="project" value="TreeGrafter"/>
</dbReference>
<dbReference type="GO" id="GO:0006310">
    <property type="term" value="P:DNA recombination"/>
    <property type="evidence" value="ECO:0007669"/>
    <property type="project" value="UniProtKB-UniRule"/>
</dbReference>
<dbReference type="GO" id="GO:0000018">
    <property type="term" value="P:regulation of DNA recombination"/>
    <property type="evidence" value="ECO:0007669"/>
    <property type="project" value="TreeGrafter"/>
</dbReference>
<dbReference type="HAMAP" id="MF_00194">
    <property type="entry name" value="RdgC"/>
    <property type="match status" value="1"/>
</dbReference>
<dbReference type="InterPro" id="IPR007476">
    <property type="entry name" value="RdgC"/>
</dbReference>
<dbReference type="NCBIfam" id="NF001461">
    <property type="entry name" value="PRK00321.1-2"/>
    <property type="match status" value="1"/>
</dbReference>
<dbReference type="NCBIfam" id="NF001462">
    <property type="entry name" value="PRK00321.1-3"/>
    <property type="match status" value="1"/>
</dbReference>
<dbReference type="NCBIfam" id="NF001464">
    <property type="entry name" value="PRK00321.1-5"/>
    <property type="match status" value="1"/>
</dbReference>
<dbReference type="PANTHER" id="PTHR38103">
    <property type="entry name" value="RECOMBINATION-ASSOCIATED PROTEIN RDGC"/>
    <property type="match status" value="1"/>
</dbReference>
<dbReference type="PANTHER" id="PTHR38103:SF1">
    <property type="entry name" value="RECOMBINATION-ASSOCIATED PROTEIN RDGC"/>
    <property type="match status" value="1"/>
</dbReference>
<dbReference type="Pfam" id="PF04381">
    <property type="entry name" value="RdgC"/>
    <property type="match status" value="1"/>
</dbReference>
<name>RDGC_PSEPG</name>
<accession>B0KTR8</accession>
<organism>
    <name type="scientific">Pseudomonas putida (strain GB-1)</name>
    <dbReference type="NCBI Taxonomy" id="76869"/>
    <lineage>
        <taxon>Bacteria</taxon>
        <taxon>Pseudomonadati</taxon>
        <taxon>Pseudomonadota</taxon>
        <taxon>Gammaproteobacteria</taxon>
        <taxon>Pseudomonadales</taxon>
        <taxon>Pseudomonadaceae</taxon>
        <taxon>Pseudomonas</taxon>
    </lineage>
</organism>
<gene>
    <name evidence="1" type="primary">rdgC</name>
    <name type="ordered locus">PputGB1_1300</name>
</gene>
<evidence type="ECO:0000255" key="1">
    <source>
        <dbReference type="HAMAP-Rule" id="MF_00194"/>
    </source>
</evidence>
<sequence>MWFKNLLTYRLTQEVPFEPEALEAALASKPARPCASQELTTYGFVAPFGKGEDAPLVHVSGEYLLIAARKEERILPSSVVNDAVKEKVEEIETEQMRKVYKKERDQIKDEIIQAFLPRAFIRRSMIFAAIAPRLGVILVNSASAKRAEDLLSTLREVMGSLPVRPATVKVAPVATMTDWVKSQQAAEGFHVLDECELRDTAEDGGIVRCKRQDLTGEEIQLHLSTGKVVTQLALAWQDKLSFILDDKMVIKRLKFEELLQEQAEQDGGDEAAQQFDASFQLMMMTFAEFLPVLFEALGGEEIPQGV</sequence>
<proteinExistence type="inferred from homology"/>
<reference key="1">
    <citation type="submission" date="2008-01" db="EMBL/GenBank/DDBJ databases">
        <title>Complete sequence of Pseudomonas putida GB-1.</title>
        <authorList>
            <consortium name="US DOE Joint Genome Institute"/>
            <person name="Copeland A."/>
            <person name="Lucas S."/>
            <person name="Lapidus A."/>
            <person name="Barry K."/>
            <person name="Glavina del Rio T."/>
            <person name="Dalin E."/>
            <person name="Tice H."/>
            <person name="Pitluck S."/>
            <person name="Bruce D."/>
            <person name="Goodwin L."/>
            <person name="Chertkov O."/>
            <person name="Brettin T."/>
            <person name="Detter J.C."/>
            <person name="Han C."/>
            <person name="Kuske C.R."/>
            <person name="Schmutz J."/>
            <person name="Larimer F."/>
            <person name="Land M."/>
            <person name="Hauser L."/>
            <person name="Kyrpides N."/>
            <person name="Kim E."/>
            <person name="McCarthy J.K."/>
            <person name="Richardson P."/>
        </authorList>
    </citation>
    <scope>NUCLEOTIDE SEQUENCE [LARGE SCALE GENOMIC DNA]</scope>
    <source>
        <strain>GB-1</strain>
    </source>
</reference>
<feature type="chain" id="PRO_1000077640" description="Recombination-associated protein RdgC">
    <location>
        <begin position="1"/>
        <end position="306"/>
    </location>
</feature>